<evidence type="ECO:0000255" key="1">
    <source>
        <dbReference type="HAMAP-Rule" id="MF_01148"/>
    </source>
</evidence>
<evidence type="ECO:0000305" key="2"/>
<gene>
    <name evidence="1" type="primary">lnt</name>
    <name type="ordered locus">TC_0821</name>
</gene>
<comment type="function">
    <text evidence="1">Catalyzes the phospholipid dependent N-acylation of the N-terminal cysteine of apolipoprotein, the last step in lipoprotein maturation.</text>
</comment>
<comment type="catalytic activity">
    <reaction evidence="1">
        <text>N-terminal S-1,2-diacyl-sn-glyceryl-L-cysteinyl-[lipoprotein] + a glycerophospholipid = N-acyl-S-1,2-diacyl-sn-glyceryl-L-cysteinyl-[lipoprotein] + a 2-acyl-sn-glycero-3-phospholipid + H(+)</text>
        <dbReference type="Rhea" id="RHEA:48228"/>
        <dbReference type="Rhea" id="RHEA-COMP:14681"/>
        <dbReference type="Rhea" id="RHEA-COMP:14684"/>
        <dbReference type="ChEBI" id="CHEBI:15378"/>
        <dbReference type="ChEBI" id="CHEBI:136912"/>
        <dbReference type="ChEBI" id="CHEBI:140656"/>
        <dbReference type="ChEBI" id="CHEBI:140657"/>
        <dbReference type="ChEBI" id="CHEBI:140660"/>
        <dbReference type="EC" id="2.3.1.269"/>
    </reaction>
</comment>
<comment type="pathway">
    <text evidence="1">Protein modification; lipoprotein biosynthesis (N-acyl transfer).</text>
</comment>
<comment type="subcellular location">
    <subcellularLocation>
        <location evidence="1">Cell inner membrane</location>
        <topology evidence="1">Multi-pass membrane protein</topology>
    </subcellularLocation>
</comment>
<comment type="similarity">
    <text evidence="1 2">Belongs to the CN hydrolase family. Apolipoprotein N-acyltransferase subfamily.</text>
</comment>
<reference key="1">
    <citation type="journal article" date="2000" name="Nucleic Acids Res.">
        <title>Genome sequences of Chlamydia trachomatis MoPn and Chlamydia pneumoniae AR39.</title>
        <authorList>
            <person name="Read T.D."/>
            <person name="Brunham R.C."/>
            <person name="Shen C."/>
            <person name="Gill S.R."/>
            <person name="Heidelberg J.F."/>
            <person name="White O."/>
            <person name="Hickey E.K."/>
            <person name="Peterson J.D."/>
            <person name="Utterback T.R."/>
            <person name="Berry K.J."/>
            <person name="Bass S."/>
            <person name="Linher K.D."/>
            <person name="Weidman J.F."/>
            <person name="Khouri H.M."/>
            <person name="Craven B."/>
            <person name="Bowman C."/>
            <person name="Dodson R.J."/>
            <person name="Gwinn M.L."/>
            <person name="Nelson W.C."/>
            <person name="DeBoy R.T."/>
            <person name="Kolonay J.F."/>
            <person name="McClarty G."/>
            <person name="Salzberg S.L."/>
            <person name="Eisen J.A."/>
            <person name="Fraser C.M."/>
        </authorList>
    </citation>
    <scope>NUCLEOTIDE SEQUENCE [LARGE SCALE GENOMIC DNA]</scope>
    <source>
        <strain>MoPn / Nigg</strain>
    </source>
</reference>
<dbReference type="EC" id="2.3.1.269" evidence="1"/>
<dbReference type="EMBL" id="AE002160">
    <property type="protein sequence ID" value="AAF39623.1"/>
    <property type="molecule type" value="Genomic_DNA"/>
</dbReference>
<dbReference type="PIR" id="B81662">
    <property type="entry name" value="B81662"/>
</dbReference>
<dbReference type="RefSeq" id="WP_010231679.1">
    <property type="nucleotide sequence ID" value="NZ_CP063055.1"/>
</dbReference>
<dbReference type="SMR" id="Q9PJK8"/>
<dbReference type="GeneID" id="1246188"/>
<dbReference type="KEGG" id="cmu:TC_0821"/>
<dbReference type="eggNOG" id="COG0815">
    <property type="taxonomic scope" value="Bacteria"/>
</dbReference>
<dbReference type="HOGENOM" id="CLU_019563_1_2_0"/>
<dbReference type="OrthoDB" id="9804277at2"/>
<dbReference type="UniPathway" id="UPA00666"/>
<dbReference type="Proteomes" id="UP000000800">
    <property type="component" value="Chromosome"/>
</dbReference>
<dbReference type="GO" id="GO:0005886">
    <property type="term" value="C:plasma membrane"/>
    <property type="evidence" value="ECO:0007669"/>
    <property type="project" value="UniProtKB-SubCell"/>
</dbReference>
<dbReference type="GO" id="GO:0016410">
    <property type="term" value="F:N-acyltransferase activity"/>
    <property type="evidence" value="ECO:0007669"/>
    <property type="project" value="UniProtKB-UniRule"/>
</dbReference>
<dbReference type="GO" id="GO:0042158">
    <property type="term" value="P:lipoprotein biosynthetic process"/>
    <property type="evidence" value="ECO:0007669"/>
    <property type="project" value="UniProtKB-UniRule"/>
</dbReference>
<dbReference type="CDD" id="cd07571">
    <property type="entry name" value="ALP_N-acyl_transferase"/>
    <property type="match status" value="1"/>
</dbReference>
<dbReference type="Gene3D" id="3.60.110.10">
    <property type="entry name" value="Carbon-nitrogen hydrolase"/>
    <property type="match status" value="1"/>
</dbReference>
<dbReference type="HAMAP" id="MF_01148">
    <property type="entry name" value="Lnt"/>
    <property type="match status" value="1"/>
</dbReference>
<dbReference type="InterPro" id="IPR004563">
    <property type="entry name" value="Apolipo_AcylTrfase"/>
</dbReference>
<dbReference type="InterPro" id="IPR003010">
    <property type="entry name" value="C-N_Hydrolase"/>
</dbReference>
<dbReference type="InterPro" id="IPR036526">
    <property type="entry name" value="C-N_Hydrolase_sf"/>
</dbReference>
<dbReference type="InterPro" id="IPR045378">
    <property type="entry name" value="LNT_N"/>
</dbReference>
<dbReference type="NCBIfam" id="TIGR00546">
    <property type="entry name" value="lnt"/>
    <property type="match status" value="1"/>
</dbReference>
<dbReference type="PANTHER" id="PTHR38686">
    <property type="entry name" value="APOLIPOPROTEIN N-ACYLTRANSFERASE"/>
    <property type="match status" value="1"/>
</dbReference>
<dbReference type="PANTHER" id="PTHR38686:SF1">
    <property type="entry name" value="APOLIPOPROTEIN N-ACYLTRANSFERASE"/>
    <property type="match status" value="1"/>
</dbReference>
<dbReference type="Pfam" id="PF00795">
    <property type="entry name" value="CN_hydrolase"/>
    <property type="match status" value="1"/>
</dbReference>
<dbReference type="Pfam" id="PF20154">
    <property type="entry name" value="LNT_N"/>
    <property type="match status" value="1"/>
</dbReference>
<dbReference type="SUPFAM" id="SSF56317">
    <property type="entry name" value="Carbon-nitrogen hydrolase"/>
    <property type="match status" value="1"/>
</dbReference>
<dbReference type="PROSITE" id="PS50263">
    <property type="entry name" value="CN_HYDROLASE"/>
    <property type="match status" value="1"/>
</dbReference>
<accession>Q9PJK8</accession>
<name>LNT_CHLMU</name>
<protein>
    <recommendedName>
        <fullName evidence="1">Apolipoprotein N-acyltransferase</fullName>
        <shortName evidence="1">ALP N-acyltransferase</shortName>
        <ecNumber evidence="1">2.3.1.269</ecNumber>
    </recommendedName>
</protein>
<keyword id="KW-0012">Acyltransferase</keyword>
<keyword id="KW-0997">Cell inner membrane</keyword>
<keyword id="KW-1003">Cell membrane</keyword>
<keyword id="KW-0472">Membrane</keyword>
<keyword id="KW-0808">Transferase</keyword>
<keyword id="KW-0812">Transmembrane</keyword>
<keyword id="KW-1133">Transmembrane helix</keyword>
<proteinExistence type="inferred from homology"/>
<sequence>MFKSVLYIGLSWVLVCFAQPDISTLASVICCMCGYGLLWRGLLSLVDSSSWRKIWCLAFFWTWSVEGFHFSWMLEDFYVGTSIYFVWCLLISYLAVTFASFSCLVVLCFRKQYWGALFWLPGVWVAIESVRYYGLLSGVSFDFIGWPLAATAYGRQFGSFFGWAGQSFVVIATNLGCCSVLVFRKSFSYGLWLVCCAFPYFLGGTYYEYVRRHFSNEEVLRVAIVQPGYSPHMQGARTASAIWSNLVSLCQGICPPVDVIVFPEVSVPFGLHRQAYSFHENQQVLESLVPNKFWNEFFTNLDWIRALSERFQCAVIMGMERWEDKNGVMHLYNAAECLSLQGEVTSYDKRILVPGGEYIPGGKFGFSLCKAFFPEFALPFQRLPGEKSGIVQITERIKAGISICYEETFGYAILPYKRQKADILVNLTNDGWYPHSRLPLVHFYHGVLRNQELGMPCIRACHTGVSAAVDSLGRIVGVLPWESKTCPVCPDVLQVSVPVYSYPTIYAKFGDAPLLFVAVSSVLGVVGYFLKRRGKTLTGSDI</sequence>
<feature type="chain" id="PRO_0000178056" description="Apolipoprotein N-acyltransferase">
    <location>
        <begin position="1"/>
        <end position="542"/>
    </location>
</feature>
<feature type="transmembrane region" description="Helical" evidence="1">
    <location>
        <begin position="26"/>
        <end position="46"/>
    </location>
</feature>
<feature type="transmembrane region" description="Helical" evidence="1">
    <location>
        <begin position="54"/>
        <end position="74"/>
    </location>
</feature>
<feature type="transmembrane region" description="Helical" evidence="1">
    <location>
        <begin position="89"/>
        <end position="109"/>
    </location>
</feature>
<feature type="transmembrane region" description="Helical" evidence="1">
    <location>
        <begin position="113"/>
        <end position="133"/>
    </location>
</feature>
<feature type="transmembrane region" description="Helical" evidence="1">
    <location>
        <begin position="163"/>
        <end position="183"/>
    </location>
</feature>
<feature type="transmembrane region" description="Helical" evidence="1">
    <location>
        <begin position="187"/>
        <end position="207"/>
    </location>
</feature>
<feature type="transmembrane region" description="Helical" evidence="1">
    <location>
        <begin position="509"/>
        <end position="529"/>
    </location>
</feature>
<feature type="domain" description="CN hydrolase" evidence="1">
    <location>
        <begin position="220"/>
        <end position="499"/>
    </location>
</feature>
<feature type="active site" description="Proton acceptor" evidence="1">
    <location>
        <position position="264"/>
    </location>
</feature>
<feature type="active site" evidence="1">
    <location>
        <position position="349"/>
    </location>
</feature>
<feature type="active site" description="Nucleophile" evidence="1">
    <location>
        <position position="404"/>
    </location>
</feature>
<organism>
    <name type="scientific">Chlamydia muridarum (strain MoPn / Nigg)</name>
    <dbReference type="NCBI Taxonomy" id="243161"/>
    <lineage>
        <taxon>Bacteria</taxon>
        <taxon>Pseudomonadati</taxon>
        <taxon>Chlamydiota</taxon>
        <taxon>Chlamydiia</taxon>
        <taxon>Chlamydiales</taxon>
        <taxon>Chlamydiaceae</taxon>
        <taxon>Chlamydia/Chlamydophila group</taxon>
        <taxon>Chlamydia</taxon>
    </lineage>
</organism>